<name>FABH_PYRYE</name>
<proteinExistence type="inferred from homology"/>
<dbReference type="EC" id="2.3.1.180" evidence="1"/>
<dbReference type="EMBL" id="AP006715">
    <property type="protein sequence ID" value="BAE92320.1"/>
    <property type="molecule type" value="Genomic_DNA"/>
</dbReference>
<dbReference type="RefSeq" id="YP_536877.1">
    <property type="nucleotide sequence ID" value="NC_007932.1"/>
</dbReference>
<dbReference type="SMR" id="Q1XDU1"/>
<dbReference type="GeneID" id="3978884"/>
<dbReference type="UniPathway" id="UPA00094"/>
<dbReference type="GO" id="GO:0009507">
    <property type="term" value="C:chloroplast"/>
    <property type="evidence" value="ECO:0007669"/>
    <property type="project" value="UniProtKB-SubCell"/>
</dbReference>
<dbReference type="GO" id="GO:0004315">
    <property type="term" value="F:3-oxoacyl-[acyl-carrier-protein] synthase activity"/>
    <property type="evidence" value="ECO:0007669"/>
    <property type="project" value="InterPro"/>
</dbReference>
<dbReference type="GO" id="GO:0033818">
    <property type="term" value="F:beta-ketoacyl-acyl-carrier-protein synthase III activity"/>
    <property type="evidence" value="ECO:0007669"/>
    <property type="project" value="UniProtKB-UniRule"/>
</dbReference>
<dbReference type="GO" id="GO:0006633">
    <property type="term" value="P:fatty acid biosynthetic process"/>
    <property type="evidence" value="ECO:0007669"/>
    <property type="project" value="UniProtKB-UniRule"/>
</dbReference>
<dbReference type="CDD" id="cd00830">
    <property type="entry name" value="KAS_III"/>
    <property type="match status" value="1"/>
</dbReference>
<dbReference type="Gene3D" id="3.40.47.10">
    <property type="match status" value="1"/>
</dbReference>
<dbReference type="HAMAP" id="MF_01815">
    <property type="entry name" value="FabH"/>
    <property type="match status" value="1"/>
</dbReference>
<dbReference type="InterPro" id="IPR013747">
    <property type="entry name" value="ACP_syn_III_C"/>
</dbReference>
<dbReference type="InterPro" id="IPR013751">
    <property type="entry name" value="ACP_syn_III_N"/>
</dbReference>
<dbReference type="InterPro" id="IPR004655">
    <property type="entry name" value="FabH"/>
</dbReference>
<dbReference type="InterPro" id="IPR016039">
    <property type="entry name" value="Thiolase-like"/>
</dbReference>
<dbReference type="NCBIfam" id="TIGR00747">
    <property type="entry name" value="fabH"/>
    <property type="match status" value="1"/>
</dbReference>
<dbReference type="NCBIfam" id="NF006829">
    <property type="entry name" value="PRK09352.1"/>
    <property type="match status" value="1"/>
</dbReference>
<dbReference type="PANTHER" id="PTHR43091">
    <property type="entry name" value="3-OXOACYL-[ACYL-CARRIER-PROTEIN] SYNTHASE"/>
    <property type="match status" value="1"/>
</dbReference>
<dbReference type="PANTHER" id="PTHR43091:SF1">
    <property type="entry name" value="BETA-KETOACYL-[ACYL-CARRIER-PROTEIN] SYNTHASE III, CHLOROPLASTIC"/>
    <property type="match status" value="1"/>
</dbReference>
<dbReference type="Pfam" id="PF08545">
    <property type="entry name" value="ACP_syn_III"/>
    <property type="match status" value="1"/>
</dbReference>
<dbReference type="Pfam" id="PF08541">
    <property type="entry name" value="ACP_syn_III_C"/>
    <property type="match status" value="1"/>
</dbReference>
<dbReference type="SUPFAM" id="SSF53901">
    <property type="entry name" value="Thiolase-like"/>
    <property type="match status" value="1"/>
</dbReference>
<comment type="function">
    <text evidence="1">Catalyzes the condensation reaction of fatty acid synthesis by the addition to an acyl acceptor of two carbons from malonyl-ACP. Catalyzes the first condensation reaction which initiates fatty acid synthesis and may therefore play a role in governing the total rate of fatty acid production. Possesses both acetoacetyl-ACP synthase and acetyl transacylase activities. Its substrate specificity determines the biosynthesis of branched-chain and/or straight-chain of fatty acids.</text>
</comment>
<comment type="catalytic activity">
    <reaction evidence="1">
        <text>malonyl-[ACP] + acetyl-CoA + H(+) = 3-oxobutanoyl-[ACP] + CO2 + CoA</text>
        <dbReference type="Rhea" id="RHEA:12080"/>
        <dbReference type="Rhea" id="RHEA-COMP:9623"/>
        <dbReference type="Rhea" id="RHEA-COMP:9625"/>
        <dbReference type="ChEBI" id="CHEBI:15378"/>
        <dbReference type="ChEBI" id="CHEBI:16526"/>
        <dbReference type="ChEBI" id="CHEBI:57287"/>
        <dbReference type="ChEBI" id="CHEBI:57288"/>
        <dbReference type="ChEBI" id="CHEBI:78449"/>
        <dbReference type="ChEBI" id="CHEBI:78450"/>
        <dbReference type="EC" id="2.3.1.180"/>
    </reaction>
</comment>
<comment type="pathway">
    <text evidence="1">Lipid metabolism; fatty acid biosynthesis.</text>
</comment>
<comment type="subunit">
    <text evidence="1">Homodimer.</text>
</comment>
<comment type="subcellular location">
    <subcellularLocation>
        <location evidence="1">Plastid</location>
        <location evidence="1">Chloroplast</location>
    </subcellularLocation>
</comment>
<comment type="domain">
    <text evidence="1">The last Arg residue of the ACP-binding site is essential for the weak association between ACP/AcpP and FabH.</text>
</comment>
<comment type="similarity">
    <text evidence="1">Belongs to the thiolase-like superfamily. FabH family.</text>
</comment>
<geneLocation type="chloroplast"/>
<organism>
    <name type="scientific">Pyropia yezoensis</name>
    <name type="common">Susabi-nori</name>
    <name type="synonym">Porphyra yezoensis</name>
    <dbReference type="NCBI Taxonomy" id="2788"/>
    <lineage>
        <taxon>Eukaryota</taxon>
        <taxon>Rhodophyta</taxon>
        <taxon>Bangiophyceae</taxon>
        <taxon>Bangiales</taxon>
        <taxon>Bangiaceae</taxon>
        <taxon>Pyropia</taxon>
    </lineage>
</organism>
<evidence type="ECO:0000255" key="1">
    <source>
        <dbReference type="HAMAP-Rule" id="MF_01815"/>
    </source>
</evidence>
<reference key="1">
    <citation type="submission" date="2003-11" db="EMBL/GenBank/DDBJ databases">
        <title>Whole genome sequence of Porphyra yezoensis chloroplast.</title>
        <authorList>
            <person name="Kunimoto M."/>
            <person name="Morishima K."/>
            <person name="Yoshikawa M."/>
            <person name="Fukuda S."/>
            <person name="Kobayashi T."/>
            <person name="Kobayashi M."/>
            <person name="Okazaki T."/>
            <person name="Ohara I."/>
            <person name="Nakayama I."/>
        </authorList>
    </citation>
    <scope>NUCLEOTIDE SEQUENCE [LARGE SCALE GENOMIC DNA]</scope>
    <source>
        <strain>U-51</strain>
    </source>
</reference>
<sequence length="324" mass="35047">MGVHILSTGSSVPNFSVENQQFEDMIETSDHWISTRTGIKKRHLAPSSTSLTKLAAEAANKALYAANLKPTEISLIILATSTPDDLFGSASQLQAEIGATTPVAFDITAACSGFIVALVTAAQFIQLVYDNILVVGADTCLDGLIGQIELPVFYLVMVLEQLVLGQSLKNSILGFKLCTDGQLNSHLQLMNKPVNNQKFGGTEIPHGNYNSITMNGKEVYKFAVFQVPTVIRQCLNNLNISIDEVDWFILHQANTRIIEAIASRLSVPFSKMITNLEHYGNTSAASIPLALDEAIQSNKIQPGQIIVLSGFGAGLTWGAIVLKW</sequence>
<feature type="chain" id="PRO_0000277264" description="Beta-ketoacyl-[acyl-carrier-protein] synthase III">
    <location>
        <begin position="1"/>
        <end position="324"/>
    </location>
</feature>
<feature type="region of interest" description="ACP-binding" evidence="1">
    <location>
        <begin position="252"/>
        <end position="256"/>
    </location>
</feature>
<feature type="active site" evidence="1">
    <location>
        <position position="111"/>
    </location>
</feature>
<feature type="active site" evidence="1">
    <location>
        <position position="251"/>
    </location>
</feature>
<feature type="active site" evidence="1">
    <location>
        <position position="281"/>
    </location>
</feature>
<protein>
    <recommendedName>
        <fullName evidence="1">Beta-ketoacyl-[acyl-carrier-protein] synthase III</fullName>
        <shortName evidence="1">Beta-ketoacyl-ACP synthase III</shortName>
        <shortName evidence="1">KAS III</shortName>
        <ecNumber evidence="1">2.3.1.180</ecNumber>
    </recommendedName>
    <alternativeName>
        <fullName evidence="1">3-oxoacyl-[acyl-carrier-protein] synthase 3</fullName>
    </alternativeName>
    <alternativeName>
        <fullName evidence="1">3-oxoacyl-[acyl-carrier-protein] synthase III</fullName>
    </alternativeName>
</protein>
<gene>
    <name evidence="1" type="primary">fabH</name>
</gene>
<accession>Q1XDU1</accession>
<keyword id="KW-0012">Acyltransferase</keyword>
<keyword id="KW-0150">Chloroplast</keyword>
<keyword id="KW-0275">Fatty acid biosynthesis</keyword>
<keyword id="KW-0276">Fatty acid metabolism</keyword>
<keyword id="KW-0444">Lipid biosynthesis</keyword>
<keyword id="KW-0443">Lipid metabolism</keyword>
<keyword id="KW-0511">Multifunctional enzyme</keyword>
<keyword id="KW-0934">Plastid</keyword>
<keyword id="KW-0808">Transferase</keyword>